<proteinExistence type="inferred from homology"/>
<sequence length="340" mass="37426">MLDPRARTLLKTLIERYIADGQPVGSRTLSRYSGLELSPATIRNVMSDLEELGLVSSPHTSAGRVPTPRGYRLFVDTMLTVESPIDSDAVTRLVQTTLQAGEPQQRVVAAAASVLSNLSQFAGVVLTPRRSHVFKQIEFLRLSDKRILLIIVTPEGDVQNRMIATQRDYAPAQLTEASNYINAHFAGLSFDEVRRRLREEIDQLRGDMTALMHAAVTASTEEPDDEETVLISGERNLLEVADLSSDMARLRKLFDVFDQKTSLLQLLDVSSHAQGVQIFIGGESTLVPIDEMSVVTAPYEVNGKIVGTLGVIGPTRMAYNRVIPIVDITARLLSLTLSQQ</sequence>
<evidence type="ECO:0000255" key="1">
    <source>
        <dbReference type="HAMAP-Rule" id="MF_00081"/>
    </source>
</evidence>
<feature type="chain" id="PRO_1000010387" description="Heat-inducible transcription repressor HrcA">
    <location>
        <begin position="1"/>
        <end position="340"/>
    </location>
</feature>
<accession>Q3JP05</accession>
<organism>
    <name type="scientific">Burkholderia pseudomallei (strain 1710b)</name>
    <dbReference type="NCBI Taxonomy" id="320372"/>
    <lineage>
        <taxon>Bacteria</taxon>
        <taxon>Pseudomonadati</taxon>
        <taxon>Pseudomonadota</taxon>
        <taxon>Betaproteobacteria</taxon>
        <taxon>Burkholderiales</taxon>
        <taxon>Burkholderiaceae</taxon>
        <taxon>Burkholderia</taxon>
        <taxon>pseudomallei group</taxon>
    </lineage>
</organism>
<comment type="function">
    <text evidence="1">Negative regulator of class I heat shock genes (grpE-dnaK-dnaJ and groELS operons). Prevents heat-shock induction of these operons.</text>
</comment>
<comment type="similarity">
    <text evidence="1">Belongs to the HrcA family.</text>
</comment>
<protein>
    <recommendedName>
        <fullName evidence="1">Heat-inducible transcription repressor HrcA</fullName>
    </recommendedName>
</protein>
<reference key="1">
    <citation type="journal article" date="2010" name="Genome Biol. Evol.">
        <title>Continuing evolution of Burkholderia mallei through genome reduction and large-scale rearrangements.</title>
        <authorList>
            <person name="Losada L."/>
            <person name="Ronning C.M."/>
            <person name="DeShazer D."/>
            <person name="Woods D."/>
            <person name="Fedorova N."/>
            <person name="Kim H.S."/>
            <person name="Shabalina S.A."/>
            <person name="Pearson T.R."/>
            <person name="Brinkac L."/>
            <person name="Tan P."/>
            <person name="Nandi T."/>
            <person name="Crabtree J."/>
            <person name="Badger J."/>
            <person name="Beckstrom-Sternberg S."/>
            <person name="Saqib M."/>
            <person name="Schutzer S.E."/>
            <person name="Keim P."/>
            <person name="Nierman W.C."/>
        </authorList>
    </citation>
    <scope>NUCLEOTIDE SEQUENCE [LARGE SCALE GENOMIC DNA]</scope>
    <source>
        <strain>1710b</strain>
    </source>
</reference>
<dbReference type="EMBL" id="CP000124">
    <property type="protein sequence ID" value="ABA49588.1"/>
    <property type="molecule type" value="Genomic_DNA"/>
</dbReference>
<dbReference type="RefSeq" id="WP_004194248.1">
    <property type="nucleotide sequence ID" value="NC_007434.1"/>
</dbReference>
<dbReference type="SMR" id="Q3JP05"/>
<dbReference type="EnsemblBacteria" id="ABA49588">
    <property type="protein sequence ID" value="ABA49588"/>
    <property type="gene ID" value="BURPS1710b_3327"/>
</dbReference>
<dbReference type="GeneID" id="93061421"/>
<dbReference type="KEGG" id="bpm:BURPS1710b_3327"/>
<dbReference type="HOGENOM" id="CLU_050019_0_0_4"/>
<dbReference type="Proteomes" id="UP000002700">
    <property type="component" value="Chromosome I"/>
</dbReference>
<dbReference type="GO" id="GO:0003677">
    <property type="term" value="F:DNA binding"/>
    <property type="evidence" value="ECO:0007669"/>
    <property type="project" value="InterPro"/>
</dbReference>
<dbReference type="GO" id="GO:0045892">
    <property type="term" value="P:negative regulation of DNA-templated transcription"/>
    <property type="evidence" value="ECO:0007669"/>
    <property type="project" value="UniProtKB-UniRule"/>
</dbReference>
<dbReference type="Gene3D" id="3.30.450.40">
    <property type="match status" value="1"/>
</dbReference>
<dbReference type="Gene3D" id="3.30.390.60">
    <property type="entry name" value="Heat-inducible transcription repressor hrca homolog, domain 3"/>
    <property type="match status" value="1"/>
</dbReference>
<dbReference type="Gene3D" id="1.10.10.10">
    <property type="entry name" value="Winged helix-like DNA-binding domain superfamily/Winged helix DNA-binding domain"/>
    <property type="match status" value="1"/>
</dbReference>
<dbReference type="HAMAP" id="MF_00081">
    <property type="entry name" value="HrcA"/>
    <property type="match status" value="1"/>
</dbReference>
<dbReference type="InterPro" id="IPR029016">
    <property type="entry name" value="GAF-like_dom_sf"/>
</dbReference>
<dbReference type="InterPro" id="IPR002571">
    <property type="entry name" value="HrcA"/>
</dbReference>
<dbReference type="InterPro" id="IPR021153">
    <property type="entry name" value="HrcA_C"/>
</dbReference>
<dbReference type="InterPro" id="IPR036388">
    <property type="entry name" value="WH-like_DNA-bd_sf"/>
</dbReference>
<dbReference type="InterPro" id="IPR036390">
    <property type="entry name" value="WH_DNA-bd_sf"/>
</dbReference>
<dbReference type="InterPro" id="IPR005104">
    <property type="entry name" value="WHTH_HrcA_DNA-bd"/>
</dbReference>
<dbReference type="InterPro" id="IPR023120">
    <property type="entry name" value="WHTH_transcript_rep_HrcA_IDD"/>
</dbReference>
<dbReference type="NCBIfam" id="TIGR00331">
    <property type="entry name" value="hrcA"/>
    <property type="match status" value="1"/>
</dbReference>
<dbReference type="PANTHER" id="PTHR34824">
    <property type="entry name" value="HEAT-INDUCIBLE TRANSCRIPTION REPRESSOR HRCA"/>
    <property type="match status" value="1"/>
</dbReference>
<dbReference type="PANTHER" id="PTHR34824:SF1">
    <property type="entry name" value="HEAT-INDUCIBLE TRANSCRIPTION REPRESSOR HRCA"/>
    <property type="match status" value="1"/>
</dbReference>
<dbReference type="Pfam" id="PF01628">
    <property type="entry name" value="HrcA"/>
    <property type="match status" value="1"/>
</dbReference>
<dbReference type="Pfam" id="PF03444">
    <property type="entry name" value="HrcA_DNA-bdg"/>
    <property type="match status" value="1"/>
</dbReference>
<dbReference type="PIRSF" id="PIRSF005485">
    <property type="entry name" value="HrcA"/>
    <property type="match status" value="1"/>
</dbReference>
<dbReference type="SUPFAM" id="SSF55781">
    <property type="entry name" value="GAF domain-like"/>
    <property type="match status" value="1"/>
</dbReference>
<dbReference type="SUPFAM" id="SSF46785">
    <property type="entry name" value="Winged helix' DNA-binding domain"/>
    <property type="match status" value="1"/>
</dbReference>
<name>HRCA_BURP1</name>
<keyword id="KW-0678">Repressor</keyword>
<keyword id="KW-0346">Stress response</keyword>
<keyword id="KW-0804">Transcription</keyword>
<keyword id="KW-0805">Transcription regulation</keyword>
<gene>
    <name evidence="1" type="primary">hrcA</name>
    <name type="ordered locus">BURPS1710b_3327</name>
</gene>